<protein>
    <recommendedName>
        <fullName evidence="1">Glycine--tRNA ligase</fullName>
        <ecNumber evidence="1">6.1.1.14</ecNumber>
    </recommendedName>
    <alternativeName>
        <fullName evidence="1">Glycyl-tRNA synthetase</fullName>
        <shortName evidence="1">GlyRS</shortName>
    </alternativeName>
</protein>
<evidence type="ECO:0000255" key="1">
    <source>
        <dbReference type="HAMAP-Rule" id="MF_00253"/>
    </source>
</evidence>
<proteinExistence type="inferred from homology"/>
<name>SYG_AGARV</name>
<accession>C4ZAV7</accession>
<feature type="chain" id="PRO_1000204581" description="Glycine--tRNA ligase">
    <location>
        <begin position="1"/>
        <end position="465"/>
    </location>
</feature>
<feature type="binding site" evidence="1">
    <location>
        <position position="98"/>
    </location>
    <ligand>
        <name>substrate</name>
    </ligand>
</feature>
<feature type="binding site" evidence="1">
    <location>
        <position position="174"/>
    </location>
    <ligand>
        <name>substrate</name>
    </ligand>
</feature>
<feature type="binding site" evidence="1">
    <location>
        <begin position="206"/>
        <end position="208"/>
    </location>
    <ligand>
        <name>ATP</name>
        <dbReference type="ChEBI" id="CHEBI:30616"/>
    </ligand>
</feature>
<feature type="binding site" evidence="1">
    <location>
        <begin position="216"/>
        <end position="221"/>
    </location>
    <ligand>
        <name>ATP</name>
        <dbReference type="ChEBI" id="CHEBI:30616"/>
    </ligand>
</feature>
<feature type="binding site" evidence="1">
    <location>
        <begin position="221"/>
        <end position="225"/>
    </location>
    <ligand>
        <name>substrate</name>
    </ligand>
</feature>
<feature type="binding site" evidence="1">
    <location>
        <begin position="290"/>
        <end position="291"/>
    </location>
    <ligand>
        <name>ATP</name>
        <dbReference type="ChEBI" id="CHEBI:30616"/>
    </ligand>
</feature>
<feature type="binding site" evidence="1">
    <location>
        <begin position="330"/>
        <end position="334"/>
    </location>
    <ligand>
        <name>substrate</name>
    </ligand>
</feature>
<feature type="binding site" evidence="1">
    <location>
        <begin position="334"/>
        <end position="337"/>
    </location>
    <ligand>
        <name>ATP</name>
        <dbReference type="ChEBI" id="CHEBI:30616"/>
    </ligand>
</feature>
<comment type="function">
    <text evidence="1">Catalyzes the attachment of glycine to tRNA(Gly).</text>
</comment>
<comment type="catalytic activity">
    <reaction evidence="1">
        <text>tRNA(Gly) + glycine + ATP = glycyl-tRNA(Gly) + AMP + diphosphate</text>
        <dbReference type="Rhea" id="RHEA:16013"/>
        <dbReference type="Rhea" id="RHEA-COMP:9664"/>
        <dbReference type="Rhea" id="RHEA-COMP:9683"/>
        <dbReference type="ChEBI" id="CHEBI:30616"/>
        <dbReference type="ChEBI" id="CHEBI:33019"/>
        <dbReference type="ChEBI" id="CHEBI:57305"/>
        <dbReference type="ChEBI" id="CHEBI:78442"/>
        <dbReference type="ChEBI" id="CHEBI:78522"/>
        <dbReference type="ChEBI" id="CHEBI:456215"/>
        <dbReference type="EC" id="6.1.1.14"/>
    </reaction>
</comment>
<comment type="subunit">
    <text evidence="1">Homodimer.</text>
</comment>
<comment type="subcellular location">
    <subcellularLocation>
        <location evidence="1">Cytoplasm</location>
    </subcellularLocation>
</comment>
<comment type="similarity">
    <text evidence="1">Belongs to the class-II aminoacyl-tRNA synthetase family.</text>
</comment>
<reference key="1">
    <citation type="journal article" date="2009" name="Proc. Natl. Acad. Sci. U.S.A.">
        <title>Characterizing a model human gut microbiota composed of members of its two dominant bacterial phyla.</title>
        <authorList>
            <person name="Mahowald M.A."/>
            <person name="Rey F.E."/>
            <person name="Seedorf H."/>
            <person name="Turnbaugh P.J."/>
            <person name="Fulton R.S."/>
            <person name="Wollam A."/>
            <person name="Shah N."/>
            <person name="Wang C."/>
            <person name="Magrini V."/>
            <person name="Wilson R.K."/>
            <person name="Cantarel B.L."/>
            <person name="Coutinho P.M."/>
            <person name="Henrissat B."/>
            <person name="Crock L.W."/>
            <person name="Russell A."/>
            <person name="Verberkmoes N.C."/>
            <person name="Hettich R.L."/>
            <person name="Gordon J.I."/>
        </authorList>
    </citation>
    <scope>NUCLEOTIDE SEQUENCE [LARGE SCALE GENOMIC DNA]</scope>
    <source>
        <strain>ATCC 33656 / DSM 3377 / JCM 17463 / KCTC 5835 / LMG 30912 / VPI 0990</strain>
    </source>
</reference>
<dbReference type="EC" id="6.1.1.14" evidence="1"/>
<dbReference type="EMBL" id="CP001107">
    <property type="protein sequence ID" value="ACR75612.1"/>
    <property type="molecule type" value="Genomic_DNA"/>
</dbReference>
<dbReference type="RefSeq" id="WP_012742709.1">
    <property type="nucleotide sequence ID" value="NC_012781.1"/>
</dbReference>
<dbReference type="SMR" id="C4ZAV7"/>
<dbReference type="STRING" id="515619.EUBREC_1868"/>
<dbReference type="PaxDb" id="515619-EUBREC_1868"/>
<dbReference type="KEGG" id="ere:EUBREC_1868"/>
<dbReference type="HOGENOM" id="CLU_015515_2_1_9"/>
<dbReference type="Proteomes" id="UP000001477">
    <property type="component" value="Chromosome"/>
</dbReference>
<dbReference type="GO" id="GO:0005737">
    <property type="term" value="C:cytoplasm"/>
    <property type="evidence" value="ECO:0007669"/>
    <property type="project" value="UniProtKB-SubCell"/>
</dbReference>
<dbReference type="GO" id="GO:0005524">
    <property type="term" value="F:ATP binding"/>
    <property type="evidence" value="ECO:0007669"/>
    <property type="project" value="UniProtKB-UniRule"/>
</dbReference>
<dbReference type="GO" id="GO:0140096">
    <property type="term" value="F:catalytic activity, acting on a protein"/>
    <property type="evidence" value="ECO:0007669"/>
    <property type="project" value="UniProtKB-ARBA"/>
</dbReference>
<dbReference type="GO" id="GO:0004820">
    <property type="term" value="F:glycine-tRNA ligase activity"/>
    <property type="evidence" value="ECO:0000250"/>
    <property type="project" value="UniProtKB"/>
</dbReference>
<dbReference type="GO" id="GO:0046983">
    <property type="term" value="F:protein dimerization activity"/>
    <property type="evidence" value="ECO:0000250"/>
    <property type="project" value="UniProtKB"/>
</dbReference>
<dbReference type="GO" id="GO:0016740">
    <property type="term" value="F:transferase activity"/>
    <property type="evidence" value="ECO:0007669"/>
    <property type="project" value="UniProtKB-ARBA"/>
</dbReference>
<dbReference type="GO" id="GO:0006426">
    <property type="term" value="P:glycyl-tRNA aminoacylation"/>
    <property type="evidence" value="ECO:0007669"/>
    <property type="project" value="UniProtKB-UniRule"/>
</dbReference>
<dbReference type="CDD" id="cd00774">
    <property type="entry name" value="GlyRS-like_core"/>
    <property type="match status" value="1"/>
</dbReference>
<dbReference type="CDD" id="cd00858">
    <property type="entry name" value="GlyRS_anticodon"/>
    <property type="match status" value="1"/>
</dbReference>
<dbReference type="FunFam" id="3.40.50.800:FF:000002">
    <property type="entry name" value="Glycine--tRNA ligase"/>
    <property type="match status" value="1"/>
</dbReference>
<dbReference type="Gene3D" id="3.40.50.800">
    <property type="entry name" value="Anticodon-binding domain"/>
    <property type="match status" value="1"/>
</dbReference>
<dbReference type="Gene3D" id="3.30.930.10">
    <property type="entry name" value="Bira Bifunctional Protein, Domain 2"/>
    <property type="match status" value="1"/>
</dbReference>
<dbReference type="HAMAP" id="MF_00253_B">
    <property type="entry name" value="Gly_tRNA_synth_B"/>
    <property type="match status" value="1"/>
</dbReference>
<dbReference type="InterPro" id="IPR002314">
    <property type="entry name" value="aa-tRNA-synt_IIb"/>
</dbReference>
<dbReference type="InterPro" id="IPR006195">
    <property type="entry name" value="aa-tRNA-synth_II"/>
</dbReference>
<dbReference type="InterPro" id="IPR045864">
    <property type="entry name" value="aa-tRNA-synth_II/BPL/LPL"/>
</dbReference>
<dbReference type="InterPro" id="IPR004154">
    <property type="entry name" value="Anticodon-bd"/>
</dbReference>
<dbReference type="InterPro" id="IPR036621">
    <property type="entry name" value="Anticodon-bd_dom_sf"/>
</dbReference>
<dbReference type="InterPro" id="IPR027031">
    <property type="entry name" value="Gly-tRNA_synthase/POLG2"/>
</dbReference>
<dbReference type="InterPro" id="IPR022961">
    <property type="entry name" value="Gly_tRNA_ligase_bac"/>
</dbReference>
<dbReference type="InterPro" id="IPR033731">
    <property type="entry name" value="GlyRS-like_core"/>
</dbReference>
<dbReference type="InterPro" id="IPR002315">
    <property type="entry name" value="tRNA-synt_gly"/>
</dbReference>
<dbReference type="NCBIfam" id="TIGR00389">
    <property type="entry name" value="glyS_dimeric"/>
    <property type="match status" value="1"/>
</dbReference>
<dbReference type="NCBIfam" id="NF003211">
    <property type="entry name" value="PRK04173.1"/>
    <property type="match status" value="1"/>
</dbReference>
<dbReference type="PANTHER" id="PTHR10745:SF8">
    <property type="entry name" value="DNA POLYMERASE SUBUNIT GAMMA-2, MITOCHONDRIAL"/>
    <property type="match status" value="1"/>
</dbReference>
<dbReference type="PANTHER" id="PTHR10745">
    <property type="entry name" value="GLYCYL-TRNA SYNTHETASE/DNA POLYMERASE SUBUNIT GAMMA-2"/>
    <property type="match status" value="1"/>
</dbReference>
<dbReference type="Pfam" id="PF03129">
    <property type="entry name" value="HGTP_anticodon"/>
    <property type="match status" value="1"/>
</dbReference>
<dbReference type="Pfam" id="PF00587">
    <property type="entry name" value="tRNA-synt_2b"/>
    <property type="match status" value="1"/>
</dbReference>
<dbReference type="PRINTS" id="PR01043">
    <property type="entry name" value="TRNASYNTHGLY"/>
</dbReference>
<dbReference type="SUPFAM" id="SSF52954">
    <property type="entry name" value="Class II aaRS ABD-related"/>
    <property type="match status" value="1"/>
</dbReference>
<dbReference type="SUPFAM" id="SSF55681">
    <property type="entry name" value="Class II aaRS and biotin synthetases"/>
    <property type="match status" value="1"/>
</dbReference>
<dbReference type="PROSITE" id="PS50862">
    <property type="entry name" value="AA_TRNA_LIGASE_II"/>
    <property type="match status" value="1"/>
</dbReference>
<organism>
    <name type="scientific">Agathobacter rectalis (strain ATCC 33656 / DSM 3377 / JCM 17463 / KCTC 5835 / VPI 0990)</name>
    <name type="common">Eubacterium rectale</name>
    <dbReference type="NCBI Taxonomy" id="515619"/>
    <lineage>
        <taxon>Bacteria</taxon>
        <taxon>Bacillati</taxon>
        <taxon>Bacillota</taxon>
        <taxon>Clostridia</taxon>
        <taxon>Lachnospirales</taxon>
        <taxon>Lachnospiraceae</taxon>
        <taxon>Agathobacter</taxon>
    </lineage>
</organism>
<sequence length="465" mass="53914">MEKTMDKIVQVAKARGFVYPGSEIYGGLANTWDYGNLGVELKNNVKRAWWKKFIQENPYNVGVDCAILMNPQTWVASGHLGGFSDPLMDCKECHERFRADKIIEDFAQDNGIELETSVDGWTNEQMVDFIKEHNVPCPSCGKHNFTDIRQFNLMFKTFQGVTEDAKNTVYLRPETAQGIFVNFKNVQRTSRKKIPFGIGQVGKSFRNEITPGNFTFRTREFEQMELEFFCEPGTDLEWFKYWRGFCRDWLISLGIKEDEMRLRDHDPAELAFYSKGTTDIEFLFPFGWGELWGIADRTDYDLGRHQEVSGQDLTYFDDQKNEKYLPYVIEPSLGADRVVLAFLCAAYDEEDIGTPEKPDVRTVFHFHPALAPVKIGVLPLSKKLNESAEKVFAQLSKTYNCEYDDRGTIGKRYRRQDEIGTPFCVTYDFDSEEDHCVTVRDRDTMEQERIAIDELDAYFAKKFEF</sequence>
<keyword id="KW-0030">Aminoacyl-tRNA synthetase</keyword>
<keyword id="KW-0067">ATP-binding</keyword>
<keyword id="KW-0963">Cytoplasm</keyword>
<keyword id="KW-0436">Ligase</keyword>
<keyword id="KW-0547">Nucleotide-binding</keyword>
<keyword id="KW-0648">Protein biosynthesis</keyword>
<gene>
    <name evidence="1" type="primary">glyQS</name>
    <name type="ordered locus">EUBREC_1868</name>
</gene>